<feature type="chain" id="PRO_0000083469" description="Nitrogen regulatory protein nrfA">
    <location>
        <begin position="1"/>
        <end position="865"/>
    </location>
</feature>
<feature type="zinc finger region" description="GATA-type" evidence="1">
    <location>
        <begin position="665"/>
        <end position="689"/>
    </location>
</feature>
<feature type="region of interest" description="Disordered" evidence="2">
    <location>
        <begin position="1"/>
        <end position="75"/>
    </location>
</feature>
<feature type="region of interest" description="Disordered" evidence="2">
    <location>
        <begin position="115"/>
        <end position="140"/>
    </location>
</feature>
<feature type="region of interest" description="Disordered" evidence="2">
    <location>
        <begin position="177"/>
        <end position="227"/>
    </location>
</feature>
<feature type="region of interest" description="Disordered" evidence="2">
    <location>
        <begin position="557"/>
        <end position="605"/>
    </location>
</feature>
<feature type="region of interest" description="Disordered" evidence="2">
    <location>
        <begin position="617"/>
        <end position="663"/>
    </location>
</feature>
<feature type="region of interest" description="Disordered" evidence="2">
    <location>
        <begin position="713"/>
        <end position="854"/>
    </location>
</feature>
<feature type="compositionally biased region" description="Low complexity" evidence="2">
    <location>
        <begin position="32"/>
        <end position="46"/>
    </location>
</feature>
<feature type="compositionally biased region" description="Basic and acidic residues" evidence="2">
    <location>
        <begin position="115"/>
        <end position="126"/>
    </location>
</feature>
<feature type="compositionally biased region" description="Basic and acidic residues" evidence="2">
    <location>
        <begin position="180"/>
        <end position="189"/>
    </location>
</feature>
<feature type="compositionally biased region" description="Polar residues" evidence="2">
    <location>
        <begin position="582"/>
        <end position="592"/>
    </location>
</feature>
<feature type="compositionally biased region" description="Polar residues" evidence="2">
    <location>
        <begin position="715"/>
        <end position="724"/>
    </location>
</feature>
<feature type="compositionally biased region" description="Polar residues" evidence="2">
    <location>
        <begin position="737"/>
        <end position="764"/>
    </location>
</feature>
<feature type="compositionally biased region" description="Low complexity" evidence="2">
    <location>
        <begin position="771"/>
        <end position="786"/>
    </location>
</feature>
<feature type="compositionally biased region" description="Low complexity" evidence="2">
    <location>
        <begin position="830"/>
        <end position="844"/>
    </location>
</feature>
<organism>
    <name type="scientific">Penicillium urticae</name>
    <dbReference type="NCBI Taxonomy" id="29844"/>
    <lineage>
        <taxon>Eukaryota</taxon>
        <taxon>Fungi</taxon>
        <taxon>Dikarya</taxon>
        <taxon>Ascomycota</taxon>
        <taxon>Pezizomycotina</taxon>
        <taxon>Eurotiomycetes</taxon>
        <taxon>Eurotiomycetidae</taxon>
        <taxon>Eurotiales</taxon>
        <taxon>Aspergillaceae</taxon>
        <taxon>Penicillium</taxon>
    </lineage>
</organism>
<name>NRFA_PENUR</name>
<evidence type="ECO:0000255" key="1">
    <source>
        <dbReference type="PROSITE-ProRule" id="PRU00094"/>
    </source>
</evidence>
<evidence type="ECO:0000256" key="2">
    <source>
        <dbReference type="SAM" id="MobiDB-lite"/>
    </source>
</evidence>
<keyword id="KW-0010">Activator</keyword>
<keyword id="KW-0238">DNA-binding</keyword>
<keyword id="KW-0479">Metal-binding</keyword>
<keyword id="KW-0534">Nitrate assimilation</keyword>
<keyword id="KW-0539">Nucleus</keyword>
<keyword id="KW-0804">Transcription</keyword>
<keyword id="KW-0805">Transcription regulation</keyword>
<keyword id="KW-0862">Zinc</keyword>
<keyword id="KW-0863">Zinc-finger</keyword>
<sequence length="865" mass="92407">MEGIHHGGHGGARPSQSMAFPGFDADSHMMSDDFTFDSPFSSSGSSNANDGVLGNSIFPEWTNGAPRGESPDEMQRKDPLAAQIWKLYTRTKSQLPNQERMENLTWRMMAMNLKRKEREQQEREQQARASETVSPAPSGIEMRISDQVSSAGPDLSHDMNLDGTSDAMNLDDFIIPFDSPAEHPSHPSADRQFTATPTGSIPIKSRKDAMMEQSTAASFPRAPQDQRTNSEFGYVARRVRKTSVDERQFFAGLSVPTRKRPAEASPQVPPVSNAIVAALGIVSGLPDYSLDHPPSAFALPGNGTVGPRRPQHHHTHSNIPYGLDTYGLNEDHGINSAGPYQQNFHFSPSESPMTAGNPFSRLYTQTPLASSLNSTEFFSPPPSGYQSTVSTPQPIYEGEQSIFFSDAPSAESHSQRRIPNYIQQRQSNLSASLQPRYMYNMNGDSHQGNAVTGPPTTHVSGFSVPQPQHVNPAQVLGHGEFSTTAPATSMFTFGGDSDNEDDDGNFERGRMTMPNDFASMDESGDMSAGLHWDGGFPGSVQSLPGFSAQHRKHVTIGSTDMMDGPPEWNQGGTLGRGHGSVASVSDVRNQNQDPRRYGKVPRTASTPNAAALLRQSLNGSASGPPTNHPSPSTPPESGLSSAVPSRPGSPGGSKNGDPNAGPTTCTNCFTQTTPLWRRNPEGQPLCNACGLFLKLHGVVRPLSLKTDVIKKRNRSSANTLAVGTSRSSKKSSRKNSIQHAPSTSISSRINTSESPPSMTGSNTLGKPGVVPIAAAPPKSGPPAGVAQGRAGVQVAPRRQRRLEKAPIGSDQDPDDSPKSAAPTSRSKVVPLAPAMAPPAAANPANHSIAGGQGASQEWEWLTMSL</sequence>
<accession>Q92269</accession>
<comment type="function">
    <text>Major nitrogen regulatory protein.</text>
</comment>
<comment type="subcellular location">
    <subcellularLocation>
        <location>Nucleus</location>
    </subcellularLocation>
</comment>
<reference key="1">
    <citation type="thesis" date="1996" institute="University of Calgary" country="Canada">
        <title>Regulation of polyketide gene expression: the isolation and function of nitrogen regulatory factor nrfA from Penicillium urticae.</title>
        <authorList>
            <person name="Ellis C.M."/>
        </authorList>
    </citation>
    <scope>NUCLEOTIDE SEQUENCE [GENOMIC DNA]</scope>
    <source>
        <strain>NRRL 2159A</strain>
    </source>
</reference>
<protein>
    <recommendedName>
        <fullName>Nitrogen regulatory protein nrfA</fullName>
    </recommendedName>
</protein>
<proteinExistence type="predicted"/>
<dbReference type="EMBL" id="U53137">
    <property type="protein sequence ID" value="AAB17740.1"/>
    <property type="molecule type" value="Genomic_DNA"/>
</dbReference>
<dbReference type="SMR" id="Q92269"/>
<dbReference type="GO" id="GO:0005634">
    <property type="term" value="C:nucleus"/>
    <property type="evidence" value="ECO:0007669"/>
    <property type="project" value="UniProtKB-SubCell"/>
</dbReference>
<dbReference type="GO" id="GO:0000981">
    <property type="term" value="F:DNA-binding transcription factor activity, RNA polymerase II-specific"/>
    <property type="evidence" value="ECO:0007669"/>
    <property type="project" value="TreeGrafter"/>
</dbReference>
<dbReference type="GO" id="GO:0000978">
    <property type="term" value="F:RNA polymerase II cis-regulatory region sequence-specific DNA binding"/>
    <property type="evidence" value="ECO:0007669"/>
    <property type="project" value="TreeGrafter"/>
</dbReference>
<dbReference type="GO" id="GO:0008270">
    <property type="term" value="F:zinc ion binding"/>
    <property type="evidence" value="ECO:0007669"/>
    <property type="project" value="UniProtKB-KW"/>
</dbReference>
<dbReference type="GO" id="GO:0000122">
    <property type="term" value="P:negative regulation of transcription by RNA polymerase II"/>
    <property type="evidence" value="ECO:0007669"/>
    <property type="project" value="TreeGrafter"/>
</dbReference>
<dbReference type="GO" id="GO:0042128">
    <property type="term" value="P:nitrate assimilation"/>
    <property type="evidence" value="ECO:0007669"/>
    <property type="project" value="UniProtKB-KW"/>
</dbReference>
<dbReference type="GO" id="GO:0045944">
    <property type="term" value="P:positive regulation of transcription by RNA polymerase II"/>
    <property type="evidence" value="ECO:0007669"/>
    <property type="project" value="TreeGrafter"/>
</dbReference>
<dbReference type="CDD" id="cd00202">
    <property type="entry name" value="ZnF_GATA"/>
    <property type="match status" value="1"/>
</dbReference>
<dbReference type="FunFam" id="3.30.50.10:FF:000007">
    <property type="entry name" value="Nitrogen regulatory AreA, N-terminal"/>
    <property type="match status" value="1"/>
</dbReference>
<dbReference type="Gene3D" id="3.30.50.10">
    <property type="entry name" value="Erythroid Transcription Factor GATA-1, subunit A"/>
    <property type="match status" value="1"/>
</dbReference>
<dbReference type="InterPro" id="IPR013860">
    <property type="entry name" value="AreA_GATA"/>
</dbReference>
<dbReference type="InterPro" id="IPR011420">
    <property type="entry name" value="AreA_N"/>
</dbReference>
<dbReference type="InterPro" id="IPR039355">
    <property type="entry name" value="Transcription_factor_GATA"/>
</dbReference>
<dbReference type="InterPro" id="IPR000679">
    <property type="entry name" value="Znf_GATA"/>
</dbReference>
<dbReference type="InterPro" id="IPR013088">
    <property type="entry name" value="Znf_NHR/GATA"/>
</dbReference>
<dbReference type="PANTHER" id="PTHR10071:SF281">
    <property type="entry name" value="BOX A-BINDING FACTOR-RELATED"/>
    <property type="match status" value="1"/>
</dbReference>
<dbReference type="PANTHER" id="PTHR10071">
    <property type="entry name" value="TRANSCRIPTION FACTOR GATA FAMILY MEMBER"/>
    <property type="match status" value="1"/>
</dbReference>
<dbReference type="Pfam" id="PF07573">
    <property type="entry name" value="AreA_N"/>
    <property type="match status" value="1"/>
</dbReference>
<dbReference type="Pfam" id="PF00320">
    <property type="entry name" value="GATA"/>
    <property type="match status" value="1"/>
</dbReference>
<dbReference type="Pfam" id="PF08550">
    <property type="entry name" value="GATA_AreA"/>
    <property type="match status" value="1"/>
</dbReference>
<dbReference type="PRINTS" id="PR00619">
    <property type="entry name" value="GATAZNFINGER"/>
</dbReference>
<dbReference type="SMART" id="SM00401">
    <property type="entry name" value="ZnF_GATA"/>
    <property type="match status" value="1"/>
</dbReference>
<dbReference type="SUPFAM" id="SSF57716">
    <property type="entry name" value="Glucocorticoid receptor-like (DNA-binding domain)"/>
    <property type="match status" value="1"/>
</dbReference>
<dbReference type="PROSITE" id="PS00344">
    <property type="entry name" value="GATA_ZN_FINGER_1"/>
    <property type="match status" value="1"/>
</dbReference>
<dbReference type="PROSITE" id="PS50114">
    <property type="entry name" value="GATA_ZN_FINGER_2"/>
    <property type="match status" value="1"/>
</dbReference>
<gene>
    <name type="primary">nrfA</name>
</gene>